<protein>
    <recommendedName>
        <fullName>G patch domain-containing protein 2</fullName>
    </recommendedName>
</protein>
<dbReference type="EMBL" id="AK030026">
    <property type="protein sequence ID" value="BAC26744.1"/>
    <property type="molecule type" value="mRNA"/>
</dbReference>
<dbReference type="EMBL" id="AK053781">
    <property type="protein sequence ID" value="BAC35520.1"/>
    <property type="molecule type" value="mRNA"/>
</dbReference>
<dbReference type="EMBL" id="AK083471">
    <property type="protein sequence ID" value="BAC38928.1"/>
    <property type="molecule type" value="mRNA"/>
</dbReference>
<dbReference type="EMBL" id="BC054810">
    <property type="protein sequence ID" value="AAH54810.1"/>
    <property type="molecule type" value="mRNA"/>
</dbReference>
<dbReference type="CCDS" id="CCDS15605.1">
    <molecule id="Q7TQC7-1"/>
</dbReference>
<dbReference type="CCDS" id="CCDS87941.1">
    <molecule id="Q7TQC7-3"/>
</dbReference>
<dbReference type="CCDS" id="CCDS87942.1">
    <molecule id="Q7TQC7-2"/>
</dbReference>
<dbReference type="RefSeq" id="NP_001344574.1">
    <molecule id="Q7TQC7-2"/>
    <property type="nucleotide sequence ID" value="NM_001357645.1"/>
</dbReference>
<dbReference type="RefSeq" id="NP_001344575.1">
    <molecule id="Q7TQC7-3"/>
    <property type="nucleotide sequence ID" value="NM_001357646.1"/>
</dbReference>
<dbReference type="RefSeq" id="NP_080643.4">
    <molecule id="Q7TQC7-1"/>
    <property type="nucleotide sequence ID" value="NM_026367.4"/>
</dbReference>
<dbReference type="RefSeq" id="XP_006497258.1">
    <property type="nucleotide sequence ID" value="XM_006497195.2"/>
</dbReference>
<dbReference type="RefSeq" id="XP_006497259.1">
    <property type="nucleotide sequence ID" value="XM_006497196.2"/>
</dbReference>
<dbReference type="RefSeq" id="XP_006497260.1">
    <property type="nucleotide sequence ID" value="XM_006497197.1"/>
</dbReference>
<dbReference type="RefSeq" id="XP_030098337.1">
    <molecule id="Q7TQC7-2"/>
    <property type="nucleotide sequence ID" value="XM_030242477.2"/>
</dbReference>
<dbReference type="BioGRID" id="212429">
    <property type="interactions" value="3"/>
</dbReference>
<dbReference type="FunCoup" id="Q7TQC7">
    <property type="interactions" value="4266"/>
</dbReference>
<dbReference type="STRING" id="10090.ENSMUSP00000065009"/>
<dbReference type="GlyGen" id="Q7TQC7">
    <property type="glycosylation" value="2 sites"/>
</dbReference>
<dbReference type="iPTMnet" id="Q7TQC7"/>
<dbReference type="PhosphoSitePlus" id="Q7TQC7"/>
<dbReference type="SwissPalm" id="Q7TQC7"/>
<dbReference type="PaxDb" id="10090-ENSMUSP00000065009"/>
<dbReference type="ProteomicsDB" id="271011">
    <molecule id="Q7TQC7-1"/>
</dbReference>
<dbReference type="ProteomicsDB" id="271012">
    <molecule id="Q7TQC7-2"/>
</dbReference>
<dbReference type="ProteomicsDB" id="271013">
    <molecule id="Q7TQC7-3"/>
</dbReference>
<dbReference type="Pumba" id="Q7TQC7"/>
<dbReference type="Antibodypedia" id="20729">
    <property type="antibodies" value="51 antibodies from 14 providers"/>
</dbReference>
<dbReference type="Ensembl" id="ENSMUST00000065573.14">
    <molecule id="Q7TQC7-1"/>
    <property type="protein sequence ID" value="ENSMUSP00000065009.8"/>
    <property type="gene ID" value="ENSMUSG00000039210.17"/>
</dbReference>
<dbReference type="Ensembl" id="ENSMUST00000110943.9">
    <molecule id="Q7TQC7-3"/>
    <property type="protein sequence ID" value="ENSMUSP00000106568.3"/>
    <property type="gene ID" value="ENSMUSG00000039210.17"/>
</dbReference>
<dbReference type="Ensembl" id="ENSMUST00000160471.8">
    <molecule id="Q7TQC7-2"/>
    <property type="protein sequence ID" value="ENSMUSP00000124407.2"/>
    <property type="gene ID" value="ENSMUSG00000039210.17"/>
</dbReference>
<dbReference type="GeneID" id="67769"/>
<dbReference type="KEGG" id="mmu:67769"/>
<dbReference type="UCSC" id="uc007dzy.2">
    <molecule id="Q7TQC7-1"/>
    <property type="organism name" value="mouse"/>
</dbReference>
<dbReference type="UCSC" id="uc011wyf.1">
    <molecule id="Q7TQC7-3"/>
    <property type="organism name" value="mouse"/>
</dbReference>
<dbReference type="AGR" id="MGI:1915019"/>
<dbReference type="CTD" id="55105"/>
<dbReference type="MGI" id="MGI:1915019">
    <property type="gene designation" value="Gpatch2"/>
</dbReference>
<dbReference type="VEuPathDB" id="HostDB:ENSMUSG00000039210"/>
<dbReference type="eggNOG" id="KOG0154">
    <property type="taxonomic scope" value="Eukaryota"/>
</dbReference>
<dbReference type="GeneTree" id="ENSGT00410000025698"/>
<dbReference type="HOGENOM" id="CLU_041240_2_0_1"/>
<dbReference type="InParanoid" id="Q7TQC7"/>
<dbReference type="OMA" id="HSWETGH"/>
<dbReference type="OrthoDB" id="6095487at2759"/>
<dbReference type="PhylomeDB" id="Q7TQC7"/>
<dbReference type="TreeFam" id="TF331954"/>
<dbReference type="BioGRID-ORCS" id="67769">
    <property type="hits" value="0 hits in 77 CRISPR screens"/>
</dbReference>
<dbReference type="ChiTaRS" id="Gpatch2">
    <property type="organism name" value="mouse"/>
</dbReference>
<dbReference type="PRO" id="PR:Q7TQC7"/>
<dbReference type="Proteomes" id="UP000000589">
    <property type="component" value="Chromosome 1"/>
</dbReference>
<dbReference type="RNAct" id="Q7TQC7">
    <property type="molecule type" value="protein"/>
</dbReference>
<dbReference type="Bgee" id="ENSMUSG00000039210">
    <property type="expression patterns" value="Expressed in embryonic brain and 230 other cell types or tissues"/>
</dbReference>
<dbReference type="ExpressionAtlas" id="Q7TQC7">
    <property type="expression patterns" value="baseline and differential"/>
</dbReference>
<dbReference type="GO" id="GO:0016607">
    <property type="term" value="C:nuclear speck"/>
    <property type="evidence" value="ECO:0007669"/>
    <property type="project" value="UniProtKB-SubCell"/>
</dbReference>
<dbReference type="GO" id="GO:0005730">
    <property type="term" value="C:nucleolus"/>
    <property type="evidence" value="ECO:0007669"/>
    <property type="project" value="UniProtKB-SubCell"/>
</dbReference>
<dbReference type="GO" id="GO:0003676">
    <property type="term" value="F:nucleic acid binding"/>
    <property type="evidence" value="ECO:0007669"/>
    <property type="project" value="InterPro"/>
</dbReference>
<dbReference type="InterPro" id="IPR000467">
    <property type="entry name" value="G_patch_dom"/>
</dbReference>
<dbReference type="InterPro" id="IPR051189">
    <property type="entry name" value="Splicing_assoc_domain"/>
</dbReference>
<dbReference type="PANTHER" id="PTHR14195">
    <property type="entry name" value="G PATCH DOMAIN CONTAINING PROTEIN 2"/>
    <property type="match status" value="1"/>
</dbReference>
<dbReference type="Pfam" id="PF01585">
    <property type="entry name" value="G-patch"/>
    <property type="match status" value="1"/>
</dbReference>
<dbReference type="SMART" id="SM00443">
    <property type="entry name" value="G_patch"/>
    <property type="match status" value="1"/>
</dbReference>
<dbReference type="PROSITE" id="PS50174">
    <property type="entry name" value="G_PATCH"/>
    <property type="match status" value="1"/>
</dbReference>
<evidence type="ECO:0000250" key="1">
    <source>
        <dbReference type="UniProtKB" id="Q9NW75"/>
    </source>
</evidence>
<evidence type="ECO:0000255" key="2">
    <source>
        <dbReference type="PROSITE-ProRule" id="PRU00092"/>
    </source>
</evidence>
<evidence type="ECO:0000256" key="3">
    <source>
        <dbReference type="SAM" id="MobiDB-lite"/>
    </source>
</evidence>
<evidence type="ECO:0000303" key="4">
    <source>
    </source>
</evidence>
<evidence type="ECO:0000305" key="5"/>
<evidence type="ECO:0007744" key="6">
    <source>
    </source>
</evidence>
<evidence type="ECO:0007744" key="7">
    <source>
    </source>
</evidence>
<proteinExistence type="evidence at protein level"/>
<accession>Q7TQC7</accession>
<accession>Q8BNJ9</accession>
<accession>Q8BPM1</accession>
<accession>Q8CDH9</accession>
<name>GPTC2_MOUSE</name>
<sequence length="527" mass="58218">MFGADGRPAIGTAAGKSWHFSRTMEELVHDLVSALEESSEQARGGFAETGEHSRNLSCPLKRQARKRRGRKRRSYNVHHPWETGHCLSEGSDSSLEEPSKDYREKHSNNKKDRSDSDDQMLVAKRRPSSNLSSSVRGKRLLWHESDFAVDSLGNRTLRRRRKVKRMAVDLPQDVSSKRTMTQLPEGCRDQDMDNDRASQYPEFTRKKVKKRKLKGIRPGPKTQEEGGVLESEERSQPNKDRMEYEEQKASDELRSESDTSSLSSTDAGLFTNDEGRQGDDEQSDWFYEKESGGACGIAGVVPWWEKDEPAELDTNLPDPVFESILSGSFPLMSHPGRGGFQARLSRLHGTPSKNIKKSSGAPPSMLSAPGPGSNKRMVHFSPDAHRHDHWFSPGARTEHGQHQLLRDNRAERGHKKSCSLKTASRQTSMHLGSLCTGDIKRRRKAAPLPGPTAAGIVGENAQPILESNIGNRMLQSMGWTPGSGLGRDGRGIAEPVQAVQRPKGLGLGFPLPKSSPTSPAPTSGNPA</sequence>
<reference key="1">
    <citation type="journal article" date="2005" name="Science">
        <title>The transcriptional landscape of the mammalian genome.</title>
        <authorList>
            <person name="Carninci P."/>
            <person name="Kasukawa T."/>
            <person name="Katayama S."/>
            <person name="Gough J."/>
            <person name="Frith M.C."/>
            <person name="Maeda N."/>
            <person name="Oyama R."/>
            <person name="Ravasi T."/>
            <person name="Lenhard B."/>
            <person name="Wells C."/>
            <person name="Kodzius R."/>
            <person name="Shimokawa K."/>
            <person name="Bajic V.B."/>
            <person name="Brenner S.E."/>
            <person name="Batalov S."/>
            <person name="Forrest A.R."/>
            <person name="Zavolan M."/>
            <person name="Davis M.J."/>
            <person name="Wilming L.G."/>
            <person name="Aidinis V."/>
            <person name="Allen J.E."/>
            <person name="Ambesi-Impiombato A."/>
            <person name="Apweiler R."/>
            <person name="Aturaliya R.N."/>
            <person name="Bailey T.L."/>
            <person name="Bansal M."/>
            <person name="Baxter L."/>
            <person name="Beisel K.W."/>
            <person name="Bersano T."/>
            <person name="Bono H."/>
            <person name="Chalk A.M."/>
            <person name="Chiu K.P."/>
            <person name="Choudhary V."/>
            <person name="Christoffels A."/>
            <person name="Clutterbuck D.R."/>
            <person name="Crowe M.L."/>
            <person name="Dalla E."/>
            <person name="Dalrymple B.P."/>
            <person name="de Bono B."/>
            <person name="Della Gatta G."/>
            <person name="di Bernardo D."/>
            <person name="Down T."/>
            <person name="Engstrom P."/>
            <person name="Fagiolini M."/>
            <person name="Faulkner G."/>
            <person name="Fletcher C.F."/>
            <person name="Fukushima T."/>
            <person name="Furuno M."/>
            <person name="Futaki S."/>
            <person name="Gariboldi M."/>
            <person name="Georgii-Hemming P."/>
            <person name="Gingeras T.R."/>
            <person name="Gojobori T."/>
            <person name="Green R.E."/>
            <person name="Gustincich S."/>
            <person name="Harbers M."/>
            <person name="Hayashi Y."/>
            <person name="Hensch T.K."/>
            <person name="Hirokawa N."/>
            <person name="Hill D."/>
            <person name="Huminiecki L."/>
            <person name="Iacono M."/>
            <person name="Ikeo K."/>
            <person name="Iwama A."/>
            <person name="Ishikawa T."/>
            <person name="Jakt M."/>
            <person name="Kanapin A."/>
            <person name="Katoh M."/>
            <person name="Kawasawa Y."/>
            <person name="Kelso J."/>
            <person name="Kitamura H."/>
            <person name="Kitano H."/>
            <person name="Kollias G."/>
            <person name="Krishnan S.P."/>
            <person name="Kruger A."/>
            <person name="Kummerfeld S.K."/>
            <person name="Kurochkin I.V."/>
            <person name="Lareau L.F."/>
            <person name="Lazarevic D."/>
            <person name="Lipovich L."/>
            <person name="Liu J."/>
            <person name="Liuni S."/>
            <person name="McWilliam S."/>
            <person name="Madan Babu M."/>
            <person name="Madera M."/>
            <person name="Marchionni L."/>
            <person name="Matsuda H."/>
            <person name="Matsuzawa S."/>
            <person name="Miki H."/>
            <person name="Mignone F."/>
            <person name="Miyake S."/>
            <person name="Morris K."/>
            <person name="Mottagui-Tabar S."/>
            <person name="Mulder N."/>
            <person name="Nakano N."/>
            <person name="Nakauchi H."/>
            <person name="Ng P."/>
            <person name="Nilsson R."/>
            <person name="Nishiguchi S."/>
            <person name="Nishikawa S."/>
            <person name="Nori F."/>
            <person name="Ohara O."/>
            <person name="Okazaki Y."/>
            <person name="Orlando V."/>
            <person name="Pang K.C."/>
            <person name="Pavan W.J."/>
            <person name="Pavesi G."/>
            <person name="Pesole G."/>
            <person name="Petrovsky N."/>
            <person name="Piazza S."/>
            <person name="Reed J."/>
            <person name="Reid J.F."/>
            <person name="Ring B.Z."/>
            <person name="Ringwald M."/>
            <person name="Rost B."/>
            <person name="Ruan Y."/>
            <person name="Salzberg S.L."/>
            <person name="Sandelin A."/>
            <person name="Schneider C."/>
            <person name="Schoenbach C."/>
            <person name="Sekiguchi K."/>
            <person name="Semple C.A."/>
            <person name="Seno S."/>
            <person name="Sessa L."/>
            <person name="Sheng Y."/>
            <person name="Shibata Y."/>
            <person name="Shimada H."/>
            <person name="Shimada K."/>
            <person name="Silva D."/>
            <person name="Sinclair B."/>
            <person name="Sperling S."/>
            <person name="Stupka E."/>
            <person name="Sugiura K."/>
            <person name="Sultana R."/>
            <person name="Takenaka Y."/>
            <person name="Taki K."/>
            <person name="Tammoja K."/>
            <person name="Tan S.L."/>
            <person name="Tang S."/>
            <person name="Taylor M.S."/>
            <person name="Tegner J."/>
            <person name="Teichmann S.A."/>
            <person name="Ueda H.R."/>
            <person name="van Nimwegen E."/>
            <person name="Verardo R."/>
            <person name="Wei C.L."/>
            <person name="Yagi K."/>
            <person name="Yamanishi H."/>
            <person name="Zabarovsky E."/>
            <person name="Zhu S."/>
            <person name="Zimmer A."/>
            <person name="Hide W."/>
            <person name="Bult C."/>
            <person name="Grimmond S.M."/>
            <person name="Teasdale R.D."/>
            <person name="Liu E.T."/>
            <person name="Brusic V."/>
            <person name="Quackenbush J."/>
            <person name="Wahlestedt C."/>
            <person name="Mattick J.S."/>
            <person name="Hume D.A."/>
            <person name="Kai C."/>
            <person name="Sasaki D."/>
            <person name="Tomaru Y."/>
            <person name="Fukuda S."/>
            <person name="Kanamori-Katayama M."/>
            <person name="Suzuki M."/>
            <person name="Aoki J."/>
            <person name="Arakawa T."/>
            <person name="Iida J."/>
            <person name="Imamura K."/>
            <person name="Itoh M."/>
            <person name="Kato T."/>
            <person name="Kawaji H."/>
            <person name="Kawagashira N."/>
            <person name="Kawashima T."/>
            <person name="Kojima M."/>
            <person name="Kondo S."/>
            <person name="Konno H."/>
            <person name="Nakano K."/>
            <person name="Ninomiya N."/>
            <person name="Nishio T."/>
            <person name="Okada M."/>
            <person name="Plessy C."/>
            <person name="Shibata K."/>
            <person name="Shiraki T."/>
            <person name="Suzuki S."/>
            <person name="Tagami M."/>
            <person name="Waki K."/>
            <person name="Watahiki A."/>
            <person name="Okamura-Oho Y."/>
            <person name="Suzuki H."/>
            <person name="Kawai J."/>
            <person name="Hayashizaki Y."/>
        </authorList>
    </citation>
    <scope>NUCLEOTIDE SEQUENCE [LARGE SCALE MRNA] (ISOFORMS 2 AND 3)</scope>
    <source>
        <strain>C57BL/6J</strain>
        <tissue>Eye</tissue>
        <tissue>Testis</tissue>
    </source>
</reference>
<reference key="2">
    <citation type="journal article" date="2004" name="Genome Res.">
        <title>The status, quality, and expansion of the NIH full-length cDNA project: the Mammalian Gene Collection (MGC).</title>
        <authorList>
            <consortium name="The MGC Project Team"/>
        </authorList>
    </citation>
    <scope>NUCLEOTIDE SEQUENCE [LARGE SCALE MRNA] (ISOFORM 1)</scope>
    <source>
        <strain>C57BL/6J</strain>
        <tissue>Brain</tissue>
    </source>
</reference>
<reference key="3">
    <citation type="journal article" date="2007" name="Proc. Natl. Acad. Sci. U.S.A.">
        <title>Large-scale phosphorylation analysis of mouse liver.</title>
        <authorList>
            <person name="Villen J."/>
            <person name="Beausoleil S.A."/>
            <person name="Gerber S.A."/>
            <person name="Gygi S.P."/>
        </authorList>
    </citation>
    <scope>PHOSPHORYLATION [LARGE SCALE ANALYSIS] AT SER-114</scope>
    <scope>IDENTIFICATION BY MASS SPECTROMETRY [LARGE SCALE ANALYSIS]</scope>
    <source>
        <tissue>Liver</tissue>
    </source>
</reference>
<reference key="4">
    <citation type="journal article" date="2010" name="Cell">
        <title>A tissue-specific atlas of mouse protein phosphorylation and expression.</title>
        <authorList>
            <person name="Huttlin E.L."/>
            <person name="Jedrychowski M.P."/>
            <person name="Elias J.E."/>
            <person name="Goswami T."/>
            <person name="Rad R."/>
            <person name="Beausoleil S.A."/>
            <person name="Villen J."/>
            <person name="Haas W."/>
            <person name="Sowa M.E."/>
            <person name="Gygi S.P."/>
        </authorList>
    </citation>
    <scope>PHOSPHORYLATION [LARGE SCALE ANALYSIS] AT SER-114</scope>
    <scope>IDENTIFICATION BY MASS SPECTROMETRY [LARGE SCALE ANALYSIS]</scope>
    <source>
        <tissue>Brain</tissue>
        <tissue>Kidney</tissue>
        <tissue>Liver</tissue>
        <tissue>Lung</tissue>
        <tissue>Spleen</tissue>
        <tissue>Testis</tissue>
    </source>
</reference>
<organism>
    <name type="scientific">Mus musculus</name>
    <name type="common">Mouse</name>
    <dbReference type="NCBI Taxonomy" id="10090"/>
    <lineage>
        <taxon>Eukaryota</taxon>
        <taxon>Metazoa</taxon>
        <taxon>Chordata</taxon>
        <taxon>Craniata</taxon>
        <taxon>Vertebrata</taxon>
        <taxon>Euteleostomi</taxon>
        <taxon>Mammalia</taxon>
        <taxon>Eutheria</taxon>
        <taxon>Euarchontoglires</taxon>
        <taxon>Glires</taxon>
        <taxon>Rodentia</taxon>
        <taxon>Myomorpha</taxon>
        <taxon>Muroidea</taxon>
        <taxon>Muridae</taxon>
        <taxon>Murinae</taxon>
        <taxon>Mus</taxon>
        <taxon>Mus</taxon>
    </lineage>
</organism>
<comment type="function">
    <text evidence="1">Enhances the ATPase activity of DHX15 in vitro.</text>
</comment>
<comment type="subunit">
    <text evidence="1">Interacts with DHX15.</text>
</comment>
<comment type="subcellular location">
    <subcellularLocation>
        <location evidence="1">Nucleus speckle</location>
    </subcellularLocation>
    <subcellularLocation>
        <location evidence="1">Nucleus</location>
        <location evidence="1">Nucleolus</location>
    </subcellularLocation>
</comment>
<comment type="alternative products">
    <event type="alternative splicing"/>
    <isoform>
        <id>Q7TQC7-1</id>
        <name>1</name>
        <sequence type="displayed"/>
    </isoform>
    <isoform>
        <id>Q7TQC7-2</id>
        <name>2</name>
        <sequence type="described" ref="VSP_010529"/>
    </isoform>
    <isoform>
        <id>Q7TQC7-3</id>
        <name>3</name>
        <sequence type="described" ref="VSP_010530"/>
    </isoform>
</comment>
<feature type="chain" id="PRO_0000087567" description="G patch domain-containing protein 2">
    <location>
        <begin position="1"/>
        <end position="527"/>
    </location>
</feature>
<feature type="domain" description="G-patch" evidence="2">
    <location>
        <begin position="466"/>
        <end position="512"/>
    </location>
</feature>
<feature type="region of interest" description="Disordered" evidence="3">
    <location>
        <begin position="35"/>
        <end position="135"/>
    </location>
</feature>
<feature type="region of interest" description="Disordered" evidence="3">
    <location>
        <begin position="175"/>
        <end position="281"/>
    </location>
</feature>
<feature type="region of interest" description="Disordered" evidence="3">
    <location>
        <begin position="350"/>
        <end position="375"/>
    </location>
</feature>
<feature type="region of interest" description="Disordered" evidence="3">
    <location>
        <begin position="480"/>
        <end position="527"/>
    </location>
</feature>
<feature type="compositionally biased region" description="Basic residues" evidence="3">
    <location>
        <begin position="62"/>
        <end position="76"/>
    </location>
</feature>
<feature type="compositionally biased region" description="Basic and acidic residues" evidence="3">
    <location>
        <begin position="97"/>
        <end position="116"/>
    </location>
</feature>
<feature type="compositionally biased region" description="Basic and acidic residues" evidence="3">
    <location>
        <begin position="186"/>
        <end position="196"/>
    </location>
</feature>
<feature type="compositionally biased region" description="Basic residues" evidence="3">
    <location>
        <begin position="206"/>
        <end position="215"/>
    </location>
</feature>
<feature type="compositionally biased region" description="Basic and acidic residues" evidence="3">
    <location>
        <begin position="231"/>
        <end position="257"/>
    </location>
</feature>
<feature type="compositionally biased region" description="Low complexity" evidence="3">
    <location>
        <begin position="510"/>
        <end position="527"/>
    </location>
</feature>
<feature type="modified residue" description="Phosphoserine" evidence="6 7">
    <location>
        <position position="114"/>
    </location>
</feature>
<feature type="modified residue" description="Phosphoserine" evidence="1">
    <location>
        <position position="116"/>
    </location>
</feature>
<feature type="modified residue" description="Phosphoserine" evidence="1">
    <location>
        <position position="145"/>
    </location>
</feature>
<feature type="splice variant" id="VSP_010529" description="In isoform 2." evidence="4">
    <location>
        <begin position="1"/>
        <end position="23"/>
    </location>
</feature>
<feature type="splice variant" id="VSP_010530" description="In isoform 3." evidence="4">
    <original>DHWFSPGARTEHGQHQLLRDNRAERGHKKSCSLKTASR</original>
    <variation>E</variation>
    <location>
        <begin position="388"/>
        <end position="425"/>
    </location>
</feature>
<feature type="sequence conflict" description="In Ref. 1; BAC26744." evidence="5" ref="1">
    <original>D</original>
    <variation>Y</variation>
    <location>
        <position position="251"/>
    </location>
</feature>
<feature type="sequence conflict" description="In Ref. 2; AAH54810." evidence="5" ref="2">
    <original>S</original>
    <variation>P</variation>
    <location>
        <position position="367"/>
    </location>
</feature>
<keyword id="KW-0025">Alternative splicing</keyword>
<keyword id="KW-0539">Nucleus</keyword>
<keyword id="KW-0597">Phosphoprotein</keyword>
<keyword id="KW-1185">Reference proteome</keyword>
<gene>
    <name type="primary">Gpatch2</name>
    <name type="synonym">Gpatc2</name>
</gene>